<protein>
    <recommendedName>
        <fullName>Hsp90 co-chaperone Cdc37</fullName>
    </recommendedName>
    <alternativeName>
        <fullName>Cell division control protein 37</fullName>
    </alternativeName>
    <alternativeName>
        <fullName>Hsp90 chaperone protein kinase-targeting subunit</fullName>
    </alternativeName>
</protein>
<sequence length="466" mass="52554">MAIDYSKWDKLELSDDSDIEVHPNVDKKSFIRWRQRDIHEKRAVRKQKMEDIKGAMAMNRRLLSRISEMETVLEKESPSDPYVLLGSFLEAKKSEDMDSAIPGGMSYHHMLMSLLKVIKDAEDTTEEKSMDDSDKCLRRLKSHKERLLKLLEDAQKEYDTLEAESKNYITSEDLHLGFDSTYVQKKEPEKPKKTKTKKETIQVIESLNNPTPPTDFPGAKEQASTGNAPKNPVNENESEDEEGLSLSEDGKKFANIDFGDYSSSEEFLKEHLNILADEEESDAILLEAFNAELEGKPSLAKQYVHQALLISYCRQLGPNGLSIFFQKIKDPNHQSQRLFLEDVHNTYVRIHERSAAISKEQAESGEGVEQIQLCAVDPNTKLSITIPEAGSTDPETQKARAAFESFPPNLQKALMTNDLDKINVVLGKMAVENAEEVVEKLSSTGMLSIEEGIIDTTKGETIPQLS</sequence>
<name>CDC37_SCHPO</name>
<gene>
    <name type="primary">cdc37</name>
    <name type="ORF">SPBC9B6.10</name>
</gene>
<dbReference type="EMBL" id="AJ132377">
    <property type="protein sequence ID" value="CAB38758.1"/>
    <property type="molecule type" value="Genomic_DNA"/>
</dbReference>
<dbReference type="EMBL" id="AJ132376">
    <property type="protein sequence ID" value="CAB38757.1"/>
    <property type="molecule type" value="mRNA"/>
</dbReference>
<dbReference type="EMBL" id="CU329671">
    <property type="protein sequence ID" value="CAB42371.2"/>
    <property type="molecule type" value="Genomic_DNA"/>
</dbReference>
<dbReference type="PIR" id="T43653">
    <property type="entry name" value="T43653"/>
</dbReference>
<dbReference type="RefSeq" id="NP_595752.1">
    <property type="nucleotide sequence ID" value="NM_001021652.2"/>
</dbReference>
<dbReference type="SMR" id="O94740"/>
<dbReference type="BioGRID" id="277805">
    <property type="interactions" value="34"/>
</dbReference>
<dbReference type="FunCoup" id="O94740">
    <property type="interactions" value="594"/>
</dbReference>
<dbReference type="IntAct" id="O94740">
    <property type="interactions" value="1"/>
</dbReference>
<dbReference type="STRING" id="284812.O94740"/>
<dbReference type="iPTMnet" id="O94740"/>
<dbReference type="PaxDb" id="4896-SPBC9B6.10.1"/>
<dbReference type="EnsemblFungi" id="SPBC9B6.10.1">
    <property type="protein sequence ID" value="SPBC9B6.10.1:pep"/>
    <property type="gene ID" value="SPBC9B6.10"/>
</dbReference>
<dbReference type="GeneID" id="2541293"/>
<dbReference type="KEGG" id="spo:2541293"/>
<dbReference type="PomBase" id="SPBC9B6.10">
    <property type="gene designation" value="cdc37"/>
</dbReference>
<dbReference type="VEuPathDB" id="FungiDB:SPBC9B6.10"/>
<dbReference type="eggNOG" id="KOG2260">
    <property type="taxonomic scope" value="Eukaryota"/>
</dbReference>
<dbReference type="HOGENOM" id="CLU_033261_0_0_1"/>
<dbReference type="InParanoid" id="O94740"/>
<dbReference type="OMA" id="NYSKWDQ"/>
<dbReference type="PhylomeDB" id="O94740"/>
<dbReference type="Reactome" id="R-SPO-114608">
    <property type="pathway name" value="Platelet degranulation"/>
</dbReference>
<dbReference type="PRO" id="PR:O94740"/>
<dbReference type="Proteomes" id="UP000002485">
    <property type="component" value="Chromosome II"/>
</dbReference>
<dbReference type="GO" id="GO:0005737">
    <property type="term" value="C:cytoplasm"/>
    <property type="evidence" value="ECO:0000314"/>
    <property type="project" value="PomBase"/>
</dbReference>
<dbReference type="GO" id="GO:0005829">
    <property type="term" value="C:cytosol"/>
    <property type="evidence" value="ECO:0007005"/>
    <property type="project" value="PomBase"/>
</dbReference>
<dbReference type="GO" id="GO:0005634">
    <property type="term" value="C:nucleus"/>
    <property type="evidence" value="ECO:0000314"/>
    <property type="project" value="PomBase"/>
</dbReference>
<dbReference type="GO" id="GO:0031072">
    <property type="term" value="F:heat shock protein binding"/>
    <property type="evidence" value="ECO:0000353"/>
    <property type="project" value="PomBase"/>
</dbReference>
<dbReference type="GO" id="GO:0019901">
    <property type="term" value="F:protein kinase binding"/>
    <property type="evidence" value="ECO:0007669"/>
    <property type="project" value="InterPro"/>
</dbReference>
<dbReference type="GO" id="GO:0051087">
    <property type="term" value="F:protein-folding chaperone binding"/>
    <property type="evidence" value="ECO:0000318"/>
    <property type="project" value="GO_Central"/>
</dbReference>
<dbReference type="GO" id="GO:0051082">
    <property type="term" value="F:unfolded protein binding"/>
    <property type="evidence" value="ECO:0000318"/>
    <property type="project" value="GO_Central"/>
</dbReference>
<dbReference type="GO" id="GO:0051301">
    <property type="term" value="P:cell division"/>
    <property type="evidence" value="ECO:0007669"/>
    <property type="project" value="UniProtKB-KW"/>
</dbReference>
<dbReference type="GO" id="GO:0006457">
    <property type="term" value="P:protein folding"/>
    <property type="evidence" value="ECO:0000316"/>
    <property type="project" value="PomBase"/>
</dbReference>
<dbReference type="GO" id="GO:0050821">
    <property type="term" value="P:protein stabilization"/>
    <property type="evidence" value="ECO:0000318"/>
    <property type="project" value="GO_Central"/>
</dbReference>
<dbReference type="FunFam" id="1.20.58.610:FF:000002">
    <property type="entry name" value="Hsp90 co-chaperone Cdc37, putative"/>
    <property type="match status" value="1"/>
</dbReference>
<dbReference type="Gene3D" id="1.20.58.610">
    <property type="entry name" value="Cdc37, Hsp90 binding domain"/>
    <property type="match status" value="1"/>
</dbReference>
<dbReference type="InterPro" id="IPR004918">
    <property type="entry name" value="Cdc37"/>
</dbReference>
<dbReference type="InterPro" id="IPR013873">
    <property type="entry name" value="Cdc37_C"/>
</dbReference>
<dbReference type="InterPro" id="IPR013874">
    <property type="entry name" value="Cdc37_Hsp90-bd"/>
</dbReference>
<dbReference type="InterPro" id="IPR038189">
    <property type="entry name" value="Cdc37_Hsp90-bd_sf"/>
</dbReference>
<dbReference type="InterPro" id="IPR013855">
    <property type="entry name" value="Cdc37_N_dom"/>
</dbReference>
<dbReference type="PANTHER" id="PTHR12800">
    <property type="entry name" value="CDC37-RELATED"/>
    <property type="match status" value="1"/>
</dbReference>
<dbReference type="PANTHER" id="PTHR12800:SF4">
    <property type="entry name" value="HSP90 CO-CHAPERONE CDC37"/>
    <property type="match status" value="1"/>
</dbReference>
<dbReference type="Pfam" id="PF08564">
    <property type="entry name" value="CDC37_C"/>
    <property type="match status" value="1"/>
</dbReference>
<dbReference type="Pfam" id="PF08565">
    <property type="entry name" value="CDC37_M"/>
    <property type="match status" value="1"/>
</dbReference>
<dbReference type="Pfam" id="PF03234">
    <property type="entry name" value="CDC37_N"/>
    <property type="match status" value="1"/>
</dbReference>
<dbReference type="SMART" id="SM01069">
    <property type="entry name" value="CDC37_C"/>
    <property type="match status" value="1"/>
</dbReference>
<dbReference type="SMART" id="SM01070">
    <property type="entry name" value="CDC37_M"/>
    <property type="match status" value="1"/>
</dbReference>
<dbReference type="SMART" id="SM01071">
    <property type="entry name" value="CDC37_N"/>
    <property type="match status" value="1"/>
</dbReference>
<dbReference type="SUPFAM" id="SSF101391">
    <property type="entry name" value="Hsp90 co-chaperone CDC37"/>
    <property type="match status" value="1"/>
</dbReference>
<organism>
    <name type="scientific">Schizosaccharomyces pombe (strain 972 / ATCC 24843)</name>
    <name type="common">Fission yeast</name>
    <dbReference type="NCBI Taxonomy" id="284812"/>
    <lineage>
        <taxon>Eukaryota</taxon>
        <taxon>Fungi</taxon>
        <taxon>Dikarya</taxon>
        <taxon>Ascomycota</taxon>
        <taxon>Taphrinomycotina</taxon>
        <taxon>Schizosaccharomycetes</taxon>
        <taxon>Schizosaccharomycetales</taxon>
        <taxon>Schizosaccharomycetaceae</taxon>
        <taxon>Schizosaccharomyces</taxon>
    </lineage>
</organism>
<proteinExistence type="evidence at protein level"/>
<reference key="1">
    <citation type="journal article" date="2004" name="Mol. Genet. Genomics">
        <title>Fission yeast Cdc37 is required for multiple cell cycle functions.</title>
        <authorList>
            <person name="Westwood P.K."/>
            <person name="Martin I.V."/>
            <person name="Fantes P.A."/>
        </authorList>
    </citation>
    <scope>NUCLEOTIDE SEQUENCE [GENOMIC DNA / MRNA]</scope>
    <scope>FUNCTION</scope>
</reference>
<reference key="2">
    <citation type="journal article" date="2002" name="Nature">
        <title>The genome sequence of Schizosaccharomyces pombe.</title>
        <authorList>
            <person name="Wood V."/>
            <person name="Gwilliam R."/>
            <person name="Rajandream M.A."/>
            <person name="Lyne M.H."/>
            <person name="Lyne R."/>
            <person name="Stewart A."/>
            <person name="Sgouros J.G."/>
            <person name="Peat N."/>
            <person name="Hayles J."/>
            <person name="Baker S.G."/>
            <person name="Basham D."/>
            <person name="Bowman S."/>
            <person name="Brooks K."/>
            <person name="Brown D."/>
            <person name="Brown S."/>
            <person name="Chillingworth T."/>
            <person name="Churcher C.M."/>
            <person name="Collins M."/>
            <person name="Connor R."/>
            <person name="Cronin A."/>
            <person name="Davis P."/>
            <person name="Feltwell T."/>
            <person name="Fraser A."/>
            <person name="Gentles S."/>
            <person name="Goble A."/>
            <person name="Hamlin N."/>
            <person name="Harris D.E."/>
            <person name="Hidalgo J."/>
            <person name="Hodgson G."/>
            <person name="Holroyd S."/>
            <person name="Hornsby T."/>
            <person name="Howarth S."/>
            <person name="Huckle E.J."/>
            <person name="Hunt S."/>
            <person name="Jagels K."/>
            <person name="James K.D."/>
            <person name="Jones L."/>
            <person name="Jones M."/>
            <person name="Leather S."/>
            <person name="McDonald S."/>
            <person name="McLean J."/>
            <person name="Mooney P."/>
            <person name="Moule S."/>
            <person name="Mungall K.L."/>
            <person name="Murphy L.D."/>
            <person name="Niblett D."/>
            <person name="Odell C."/>
            <person name="Oliver K."/>
            <person name="O'Neil S."/>
            <person name="Pearson D."/>
            <person name="Quail M.A."/>
            <person name="Rabbinowitsch E."/>
            <person name="Rutherford K.M."/>
            <person name="Rutter S."/>
            <person name="Saunders D."/>
            <person name="Seeger K."/>
            <person name="Sharp S."/>
            <person name="Skelton J."/>
            <person name="Simmonds M.N."/>
            <person name="Squares R."/>
            <person name="Squares S."/>
            <person name="Stevens K."/>
            <person name="Taylor K."/>
            <person name="Taylor R.G."/>
            <person name="Tivey A."/>
            <person name="Walsh S.V."/>
            <person name="Warren T."/>
            <person name="Whitehead S."/>
            <person name="Woodward J.R."/>
            <person name="Volckaert G."/>
            <person name="Aert R."/>
            <person name="Robben J."/>
            <person name="Grymonprez B."/>
            <person name="Weltjens I."/>
            <person name="Vanstreels E."/>
            <person name="Rieger M."/>
            <person name="Schaefer M."/>
            <person name="Mueller-Auer S."/>
            <person name="Gabel C."/>
            <person name="Fuchs M."/>
            <person name="Duesterhoeft A."/>
            <person name="Fritzc C."/>
            <person name="Holzer E."/>
            <person name="Moestl D."/>
            <person name="Hilbert H."/>
            <person name="Borzym K."/>
            <person name="Langer I."/>
            <person name="Beck A."/>
            <person name="Lehrach H."/>
            <person name="Reinhardt R."/>
            <person name="Pohl T.M."/>
            <person name="Eger P."/>
            <person name="Zimmermann W."/>
            <person name="Wedler H."/>
            <person name="Wambutt R."/>
            <person name="Purnelle B."/>
            <person name="Goffeau A."/>
            <person name="Cadieu E."/>
            <person name="Dreano S."/>
            <person name="Gloux S."/>
            <person name="Lelaure V."/>
            <person name="Mottier S."/>
            <person name="Galibert F."/>
            <person name="Aves S.J."/>
            <person name="Xiang Z."/>
            <person name="Hunt C."/>
            <person name="Moore K."/>
            <person name="Hurst S.M."/>
            <person name="Lucas M."/>
            <person name="Rochet M."/>
            <person name="Gaillardin C."/>
            <person name="Tallada V.A."/>
            <person name="Garzon A."/>
            <person name="Thode G."/>
            <person name="Daga R.R."/>
            <person name="Cruzado L."/>
            <person name="Jimenez J."/>
            <person name="Sanchez M."/>
            <person name="del Rey F."/>
            <person name="Benito J."/>
            <person name="Dominguez A."/>
            <person name="Revuelta J.L."/>
            <person name="Moreno S."/>
            <person name="Armstrong J."/>
            <person name="Forsburg S.L."/>
            <person name="Cerutti L."/>
            <person name="Lowe T."/>
            <person name="McCombie W.R."/>
            <person name="Paulsen I."/>
            <person name="Potashkin J."/>
            <person name="Shpakovski G.V."/>
            <person name="Ussery D."/>
            <person name="Barrell B.G."/>
            <person name="Nurse P."/>
        </authorList>
    </citation>
    <scope>NUCLEOTIDE SEQUENCE [LARGE SCALE GENOMIC DNA]</scope>
    <source>
        <strain>972 / ATCC 24843</strain>
    </source>
</reference>
<reference key="3">
    <citation type="journal article" date="2003" name="Mol. Cell. Biol.">
        <title>Identification of cdc37 as a novel regulator of the stress-responsive mitogen-activated protein kinase.</title>
        <authorList>
            <person name="Tatebe H."/>
            <person name="Shiozaki K."/>
        </authorList>
    </citation>
    <scope>FUNCTION</scope>
    <scope>SUBUNIT</scope>
    <scope>INTERACTION WITH STY1</scope>
    <scope>SUBCELLULAR LOCATION</scope>
</reference>
<reference key="4">
    <citation type="journal article" date="2006" name="Nat. Biotechnol.">
        <title>ORFeome cloning and global analysis of protein localization in the fission yeast Schizosaccharomyces pombe.</title>
        <authorList>
            <person name="Matsuyama A."/>
            <person name="Arai R."/>
            <person name="Yashiroda Y."/>
            <person name="Shirai A."/>
            <person name="Kamata A."/>
            <person name="Sekido S."/>
            <person name="Kobayashi Y."/>
            <person name="Hashimoto A."/>
            <person name="Hamamoto M."/>
            <person name="Hiraoka Y."/>
            <person name="Horinouchi S."/>
            <person name="Yoshida M."/>
        </authorList>
    </citation>
    <scope>SUBCELLULAR LOCATION [LARGE SCALE ANALYSIS]</scope>
</reference>
<reference key="5">
    <citation type="journal article" date="2008" name="J. Proteome Res.">
        <title>Phosphoproteome analysis of fission yeast.</title>
        <authorList>
            <person name="Wilson-Grady J.T."/>
            <person name="Villen J."/>
            <person name="Gygi S.P."/>
        </authorList>
    </citation>
    <scope>PHOSPHORYLATION [LARGE SCALE ANALYSIS] AT SER-238</scope>
    <scope>IDENTIFICATION BY MASS SPECTROMETRY</scope>
</reference>
<comment type="function">
    <text evidence="2 3">Co-chaperone that binds to numerous kinases and promotes their interaction with the Hsp90 complex, resulting in stabilization and promotion of their activity.</text>
</comment>
<comment type="subunit">
    <text evidence="2">Forms a complex with Hsp90. Interacts with sty1.</text>
</comment>
<comment type="subcellular location">
    <subcellularLocation>
        <location>Nucleus</location>
    </subcellularLocation>
    <subcellularLocation>
        <location>Cytoplasm</location>
    </subcellularLocation>
    <text>When in the nucleus associated with chromatin.</text>
</comment>
<comment type="similarity">
    <text evidence="5">Belongs to the CDC37 family.</text>
</comment>
<keyword id="KW-0131">Cell cycle</keyword>
<keyword id="KW-0132">Cell division</keyword>
<keyword id="KW-0143">Chaperone</keyword>
<keyword id="KW-0963">Cytoplasm</keyword>
<keyword id="KW-0539">Nucleus</keyword>
<keyword id="KW-0597">Phosphoprotein</keyword>
<keyword id="KW-1185">Reference proteome</keyword>
<accession>O94740</accession>
<evidence type="ECO:0000256" key="1">
    <source>
        <dbReference type="SAM" id="MobiDB-lite"/>
    </source>
</evidence>
<evidence type="ECO:0000269" key="2">
    <source>
    </source>
</evidence>
<evidence type="ECO:0000269" key="3">
    <source>
    </source>
</evidence>
<evidence type="ECO:0000269" key="4">
    <source>
    </source>
</evidence>
<evidence type="ECO:0000305" key="5"/>
<feature type="chain" id="PRO_0000195066" description="Hsp90 co-chaperone Cdc37">
    <location>
        <begin position="1"/>
        <end position="466"/>
    </location>
</feature>
<feature type="region of interest" description="Disordered" evidence="1">
    <location>
        <begin position="204"/>
        <end position="249"/>
    </location>
</feature>
<feature type="modified residue" description="Phosphoserine" evidence="4">
    <location>
        <position position="238"/>
    </location>
</feature>